<proteinExistence type="evidence at transcript level"/>
<dbReference type="EC" id="2.4.1.68"/>
<dbReference type="EMBL" id="BC067957">
    <property type="protein sequence ID" value="AAH67957.1"/>
    <property type="molecule type" value="mRNA"/>
</dbReference>
<dbReference type="RefSeq" id="NP_001001232.1">
    <property type="nucleotide sequence ID" value="NM_001001232.2"/>
</dbReference>
<dbReference type="RefSeq" id="XP_012825727.1">
    <property type="nucleotide sequence ID" value="XM_012970273.2"/>
</dbReference>
<dbReference type="SMR" id="Q6NVP8"/>
<dbReference type="FunCoup" id="Q6NVP8">
    <property type="interactions" value="1161"/>
</dbReference>
<dbReference type="STRING" id="8364.ENSXETP00000009888"/>
<dbReference type="CAZy" id="GT23">
    <property type="family name" value="Glycosyltransferase Family 23"/>
</dbReference>
<dbReference type="PaxDb" id="8364-ENSXETP00000016641"/>
<dbReference type="DNASU" id="407913"/>
<dbReference type="GeneID" id="407913"/>
<dbReference type="KEGG" id="xtr:407913"/>
<dbReference type="AGR" id="Xenbase:XB-GENE-954943"/>
<dbReference type="CTD" id="2530"/>
<dbReference type="Xenbase" id="XB-GENE-954943">
    <property type="gene designation" value="fut8"/>
</dbReference>
<dbReference type="eggNOG" id="KOG3705">
    <property type="taxonomic scope" value="Eukaryota"/>
</dbReference>
<dbReference type="HOGENOM" id="CLU_021940_1_0_1"/>
<dbReference type="InParanoid" id="Q6NVP8"/>
<dbReference type="OMA" id="SDGYEAW"/>
<dbReference type="OrthoDB" id="2014825at2759"/>
<dbReference type="PhylomeDB" id="Q6NVP8"/>
<dbReference type="TreeFam" id="TF106108"/>
<dbReference type="Reactome" id="R-XTR-975578">
    <property type="pathway name" value="Reactions specific to the complex N-glycan synthesis pathway"/>
</dbReference>
<dbReference type="UniPathway" id="UPA00378"/>
<dbReference type="Proteomes" id="UP000008143">
    <property type="component" value="Chromosome 8"/>
</dbReference>
<dbReference type="Bgee" id="ENSXETG00000007644">
    <property type="expression patterns" value="Expressed in heart and 12 other cell types or tissues"/>
</dbReference>
<dbReference type="GO" id="GO:0032580">
    <property type="term" value="C:Golgi cisterna membrane"/>
    <property type="evidence" value="ECO:0007669"/>
    <property type="project" value="UniProtKB-SubCell"/>
</dbReference>
<dbReference type="GO" id="GO:0008424">
    <property type="term" value="F:glycoprotein 6-alpha-L-fucosyltransferase activity"/>
    <property type="evidence" value="ECO:0000250"/>
    <property type="project" value="UniProtKB"/>
</dbReference>
<dbReference type="GO" id="GO:0017124">
    <property type="term" value="F:SH3 domain binding"/>
    <property type="evidence" value="ECO:0007669"/>
    <property type="project" value="UniProtKB-KW"/>
</dbReference>
<dbReference type="GO" id="GO:0046368">
    <property type="term" value="P:GDP-L-fucose metabolic process"/>
    <property type="evidence" value="ECO:0000250"/>
    <property type="project" value="UniProtKB"/>
</dbReference>
<dbReference type="GO" id="GO:0018279">
    <property type="term" value="P:protein N-linked glycosylation via asparagine"/>
    <property type="evidence" value="ECO:0000250"/>
    <property type="project" value="UniProtKB"/>
</dbReference>
<dbReference type="CDD" id="cd11300">
    <property type="entry name" value="Fut8_like"/>
    <property type="match status" value="1"/>
</dbReference>
<dbReference type="CDD" id="cd11792">
    <property type="entry name" value="SH3_Fut8"/>
    <property type="match status" value="1"/>
</dbReference>
<dbReference type="FunFam" id="1.10.287.1060:FF:000003">
    <property type="entry name" value="Alpha-(1,6)-fucosyltransferase"/>
    <property type="match status" value="1"/>
</dbReference>
<dbReference type="FunFam" id="2.30.30.40:FF:000070">
    <property type="entry name" value="Alpha-(1,6)-fucosyltransferase"/>
    <property type="match status" value="1"/>
</dbReference>
<dbReference type="FunFam" id="3.40.50.11350:FF:000001">
    <property type="entry name" value="Alpha-(1,6)-fucosyltransferase"/>
    <property type="match status" value="1"/>
</dbReference>
<dbReference type="Gene3D" id="3.40.50.11350">
    <property type="match status" value="1"/>
</dbReference>
<dbReference type="Gene3D" id="1.10.287.1060">
    <property type="entry name" value="ESAT-6-like"/>
    <property type="match status" value="1"/>
</dbReference>
<dbReference type="Gene3D" id="2.30.30.40">
    <property type="entry name" value="SH3 Domains"/>
    <property type="match status" value="1"/>
</dbReference>
<dbReference type="InterPro" id="IPR015827">
    <property type="entry name" value="Fut8"/>
</dbReference>
<dbReference type="InterPro" id="IPR045573">
    <property type="entry name" value="Fut8_N_cat"/>
</dbReference>
<dbReference type="InterPro" id="IPR035653">
    <property type="entry name" value="Fut8_SH3"/>
</dbReference>
<dbReference type="InterPro" id="IPR027350">
    <property type="entry name" value="GT23_dom"/>
</dbReference>
<dbReference type="InterPro" id="IPR036028">
    <property type="entry name" value="SH3-like_dom_sf"/>
</dbReference>
<dbReference type="InterPro" id="IPR001452">
    <property type="entry name" value="SH3_domain"/>
</dbReference>
<dbReference type="PANTHER" id="PTHR13132">
    <property type="entry name" value="ALPHA- 1,6 -FUCOSYLTRANSFERASE"/>
    <property type="match status" value="1"/>
</dbReference>
<dbReference type="PANTHER" id="PTHR13132:SF29">
    <property type="entry name" value="ALPHA-(1,6)-FUCOSYLTRANSFERASE"/>
    <property type="match status" value="1"/>
</dbReference>
<dbReference type="Pfam" id="PF19745">
    <property type="entry name" value="FUT8_N_cat"/>
    <property type="match status" value="1"/>
</dbReference>
<dbReference type="Pfam" id="PF14604">
    <property type="entry name" value="SH3_9"/>
    <property type="match status" value="1"/>
</dbReference>
<dbReference type="PIRSF" id="PIRSF000472">
    <property type="entry name" value="Alpha1_6FUT_euk"/>
    <property type="match status" value="1"/>
</dbReference>
<dbReference type="SMART" id="SM00326">
    <property type="entry name" value="SH3"/>
    <property type="match status" value="1"/>
</dbReference>
<dbReference type="SUPFAM" id="SSF50044">
    <property type="entry name" value="SH3-domain"/>
    <property type="match status" value="1"/>
</dbReference>
<dbReference type="PROSITE" id="PS51659">
    <property type="entry name" value="GT23"/>
    <property type="match status" value="1"/>
</dbReference>
<dbReference type="PROSITE" id="PS50002">
    <property type="entry name" value="SH3"/>
    <property type="match status" value="1"/>
</dbReference>
<organism>
    <name type="scientific">Xenopus tropicalis</name>
    <name type="common">Western clawed frog</name>
    <name type="synonym">Silurana tropicalis</name>
    <dbReference type="NCBI Taxonomy" id="8364"/>
    <lineage>
        <taxon>Eukaryota</taxon>
        <taxon>Metazoa</taxon>
        <taxon>Chordata</taxon>
        <taxon>Craniata</taxon>
        <taxon>Vertebrata</taxon>
        <taxon>Euteleostomi</taxon>
        <taxon>Amphibia</taxon>
        <taxon>Batrachia</taxon>
        <taxon>Anura</taxon>
        <taxon>Pipoidea</taxon>
        <taxon>Pipidae</taxon>
        <taxon>Xenopodinae</taxon>
        <taxon>Xenopus</taxon>
        <taxon>Silurana</taxon>
    </lineage>
</organism>
<gene>
    <name type="primary">fut8</name>
</gene>
<protein>
    <recommendedName>
        <fullName>Alpha-(1,6)-fucosyltransferase</fullName>
        <shortName>Alpha1-6FucT</shortName>
        <ecNumber>2.4.1.68</ecNumber>
    </recommendedName>
    <alternativeName>
        <fullName>GDP-L-Fuc:N-acetyl-beta-D-glucosaminide alpha1,6-fucosyltransferase</fullName>
    </alternativeName>
    <alternativeName>
        <fullName>GDP-fucose--glycoprotein fucosyltransferase</fullName>
    </alternativeName>
    <alternativeName>
        <fullName>Glycoprotein 6-alpha-L-fucosyltransferase</fullName>
    </alternativeName>
</protein>
<reference key="1">
    <citation type="submission" date="2004-03" db="EMBL/GenBank/DDBJ databases">
        <authorList>
            <consortium name="NIH - Xenopus Gene Collection (XGC) project"/>
        </authorList>
    </citation>
    <scope>NUCLEOTIDE SEQUENCE [LARGE SCALE MRNA]</scope>
    <source>
        <tissue>Embryo</tissue>
    </source>
</reference>
<sequence>MRPWTGSWRWIMLILFAWGTLLFYIGGHLVRDNENPDHSSRELSKILAKLERLKQQNEDLRRMAESLRIPEGPIEQGAAAGRIRALEEQLLKAKEQIEMYKQQSSNAVSGLGKDHEILRRAIENGAKEFWYFVQSEVKKLKHLDRNELQRHVDEIIIDMGHQQRSVMTDLYYLSQTDGAGDWREREAKDLTDLVQRRITYLQNPKDCSKAKKLVCNINKGCGYGCQLHHVVYCFMIAYGTQRTLILESQSWRYATGGWETVFKPVSETCTDRSGSSTGHWSGEANDKNVQVVELPIVDSLHPRPPYLPLGVPEDLADRLIRLHGDPAVWWVSQFVKYLIRPQPWLEKEIEESTKKLGFKHPVIGVHVRRTDKVGTEAAFHPIEEYMVHVEEHFQLLARRMQIDKKRVYLATDDPTLLQEAKAKYPQYEFISDNSISWSAGLHNRYTENSLRGVILDIHFLSQADFLVCTFSSQVCRVAYEIMQTLHPDASAHFHSLDDIYYFGGQNAHNQLAIYPHQPRNAEEIPLEPGDIIGVAGNHWDGYSKGINRKLGRTGLYPSYKVKEKIETVKYPTYQEAEK</sequence>
<name>FUT8_XENTR</name>
<evidence type="ECO:0000250" key="1"/>
<evidence type="ECO:0000255" key="2"/>
<evidence type="ECO:0000255" key="3">
    <source>
        <dbReference type="PROSITE-ProRule" id="PRU00192"/>
    </source>
</evidence>
<evidence type="ECO:0000255" key="4">
    <source>
        <dbReference type="PROSITE-ProRule" id="PRU00992"/>
    </source>
</evidence>
<comment type="function">
    <text evidence="1">Catalyzes the addition of fucose in alpha 1-6 linkage to the first GlcNAc residue, next to the peptide chains in N-glycans.</text>
</comment>
<comment type="catalytic activity">
    <reaction>
        <text>N(4)-{beta-D-GlcNAc-(1-&gt;2)-alpha-D-Man-(1-&gt;3)-[beta-D-GlcNAc-(1-&gt;2)-alpha-D-Man-(1-&gt;6)]-beta-D-Man-(1-&gt;4)-beta-D-GlcNAc-(1-&gt;4)-beta-D-GlcNAc}-L-asparaginyl-[protein] + GDP-beta-L-fucose = an N(4)-{beta-D-GlcNAc-(1-&gt;2)-alpha-D-Man-(1-&gt;3)-[beta-D-GlcNAc-(1-&gt;2)-alpha-D-Man-(1-&gt;6)]-beta-D-Man-(1-&gt;4)-beta-D-GlcNAc-(1-&gt;4)-[alpha-L-Fuc-(1-&gt;6)]-beta-D-GlcNAc}-L-asparaginyl-[protein] + GDP + H(+)</text>
        <dbReference type="Rhea" id="RHEA:12985"/>
        <dbReference type="Rhea" id="RHEA-COMP:13526"/>
        <dbReference type="Rhea" id="RHEA-COMP:13532"/>
        <dbReference type="ChEBI" id="CHEBI:15378"/>
        <dbReference type="ChEBI" id="CHEBI:57273"/>
        <dbReference type="ChEBI" id="CHEBI:58189"/>
        <dbReference type="ChEBI" id="CHEBI:60651"/>
        <dbReference type="ChEBI" id="CHEBI:137207"/>
        <dbReference type="EC" id="2.4.1.68"/>
    </reaction>
</comment>
<comment type="pathway">
    <text>Protein modification; protein glycosylation.</text>
</comment>
<comment type="subcellular location">
    <subcellularLocation>
        <location evidence="1">Golgi apparatus</location>
        <location evidence="1">Golgi stack membrane</location>
        <topology evidence="1">Single-pass type II membrane protein</topology>
    </subcellularLocation>
    <text evidence="1">Membrane-bound form in trans cisternae of Golgi.</text>
</comment>
<comment type="similarity">
    <text evidence="4">Belongs to the glycosyltransferase 23 family.</text>
</comment>
<feature type="chain" id="PRO_0000357043" description="Alpha-(1,6)-fucosyltransferase">
    <location>
        <begin position="1"/>
        <end position="578"/>
    </location>
</feature>
<feature type="topological domain" description="Cytoplasmic" evidence="2">
    <location>
        <begin position="1"/>
        <end position="9"/>
    </location>
</feature>
<feature type="transmembrane region" description="Helical; Signal-anchor for type II membrane protein" evidence="2">
    <location>
        <begin position="10"/>
        <end position="30"/>
    </location>
</feature>
<feature type="topological domain" description="Lumenal" evidence="2">
    <location>
        <begin position="31"/>
        <end position="578"/>
    </location>
</feature>
<feature type="domain" description="GT23" evidence="4">
    <location>
        <begin position="209"/>
        <end position="496"/>
    </location>
</feature>
<feature type="domain" description="SH3" evidence="3">
    <location>
        <begin position="505"/>
        <end position="566"/>
    </location>
</feature>
<feature type="region of interest" description="Important for donor substrate binding">
    <location>
        <begin position="368"/>
        <end position="369"/>
    </location>
</feature>
<feature type="short sequence motif" description="SH3-binding" evidence="2">
    <location>
        <begin position="302"/>
        <end position="308"/>
    </location>
</feature>
<feature type="disulfide bond" evidence="1">
    <location>
        <begin position="207"/>
        <end position="269"/>
    </location>
</feature>
<feature type="disulfide bond" evidence="1">
    <location>
        <begin position="215"/>
        <end position="233"/>
    </location>
</feature>
<feature type="disulfide bond" evidence="1">
    <location>
        <begin position="221"/>
        <end position="225"/>
    </location>
</feature>
<feature type="disulfide bond" evidence="1">
    <location>
        <begin position="468"/>
        <end position="475"/>
    </location>
</feature>
<accession>Q6NVP8</accession>
<keyword id="KW-1015">Disulfide bond</keyword>
<keyword id="KW-0328">Glycosyltransferase</keyword>
<keyword id="KW-0333">Golgi apparatus</keyword>
<keyword id="KW-0472">Membrane</keyword>
<keyword id="KW-1185">Reference proteome</keyword>
<keyword id="KW-0728">SH3 domain</keyword>
<keyword id="KW-0729">SH3-binding</keyword>
<keyword id="KW-0735">Signal-anchor</keyword>
<keyword id="KW-0808">Transferase</keyword>
<keyword id="KW-0812">Transmembrane</keyword>
<keyword id="KW-1133">Transmembrane helix</keyword>